<feature type="chain" id="PRO_0000274603" description="IQ motif and ubiquitin-like domain-containing protein">
    <location>
        <begin position="1"/>
        <end position="788"/>
    </location>
</feature>
<feature type="domain" description="Ubiquitin-like">
    <location>
        <begin position="127"/>
        <end position="203"/>
    </location>
</feature>
<feature type="domain" description="IQ" evidence="2">
    <location>
        <begin position="334"/>
        <end position="363"/>
    </location>
</feature>
<feature type="region of interest" description="Disordered" evidence="3">
    <location>
        <begin position="1"/>
        <end position="89"/>
    </location>
</feature>
<feature type="compositionally biased region" description="Basic and acidic residues" evidence="3">
    <location>
        <begin position="7"/>
        <end position="20"/>
    </location>
</feature>
<feature type="compositionally biased region" description="Acidic residues" evidence="3">
    <location>
        <begin position="31"/>
        <end position="54"/>
    </location>
</feature>
<feature type="compositionally biased region" description="Basic and acidic residues" evidence="3">
    <location>
        <begin position="68"/>
        <end position="78"/>
    </location>
</feature>
<feature type="compositionally biased region" description="Polar residues" evidence="3">
    <location>
        <begin position="80"/>
        <end position="89"/>
    </location>
</feature>
<feature type="mutagenesis site" description="Male infertility due to asthenospermia; leads to radial spoke defects, and increased levels of phosphorylated MAPK1/ERK2 and MAPK3/ERK1." evidence="5">
    <location>
        <begin position="310"/>
        <end position="788"/>
    </location>
</feature>
<feature type="sequence conflict" description="In Ref. 1; BAC26685." evidence="7" ref="1">
    <original>T</original>
    <variation>A</variation>
    <location>
        <position position="521"/>
    </location>
</feature>
<feature type="sequence conflict" description="In Ref. 1; BAC26685." evidence="7" ref="1">
    <original>E</original>
    <variation>Q</variation>
    <location>
        <position position="535"/>
    </location>
</feature>
<proteinExistence type="evidence at protein level"/>
<gene>
    <name type="primary">Iqub</name>
</gene>
<dbReference type="EMBL" id="AK029931">
    <property type="protein sequence ID" value="BAC26685.1"/>
    <property type="molecule type" value="mRNA"/>
</dbReference>
<dbReference type="EMBL" id="AK161501">
    <property type="protein sequence ID" value="BAE36427.1"/>
    <property type="molecule type" value="mRNA"/>
</dbReference>
<dbReference type="EMBL" id="BC137937">
    <property type="protein sequence ID" value="AAI37938.1"/>
    <property type="molecule type" value="mRNA"/>
</dbReference>
<dbReference type="EMBL" id="BC137957">
    <property type="protein sequence ID" value="AAI37958.1"/>
    <property type="molecule type" value="mRNA"/>
</dbReference>
<dbReference type="CCDS" id="CCDS19941.1"/>
<dbReference type="RefSeq" id="NP_766123.2">
    <property type="nucleotide sequence ID" value="NM_172535.3"/>
</dbReference>
<dbReference type="SMR" id="Q8CDK3"/>
<dbReference type="BioGRID" id="229558">
    <property type="interactions" value="3"/>
</dbReference>
<dbReference type="ComplexPortal" id="CPX-8162">
    <property type="entry name" value="Radial spoke complex, flagellar variant"/>
</dbReference>
<dbReference type="FunCoup" id="Q8CDK3">
    <property type="interactions" value="76"/>
</dbReference>
<dbReference type="STRING" id="10090.ENSMUSP00000051177"/>
<dbReference type="iPTMnet" id="Q8CDK3"/>
<dbReference type="PhosphoSitePlus" id="Q8CDK3"/>
<dbReference type="jPOST" id="Q8CDK3"/>
<dbReference type="PaxDb" id="10090-ENSMUSP00000051177"/>
<dbReference type="ProteomicsDB" id="269094"/>
<dbReference type="Antibodypedia" id="17626">
    <property type="antibodies" value="21 antibodies from 9 providers"/>
</dbReference>
<dbReference type="Ensembl" id="ENSMUST00000052277.5">
    <property type="protein sequence ID" value="ENSMUSP00000051177.5"/>
    <property type="gene ID" value="ENSMUSG00000046192.5"/>
</dbReference>
<dbReference type="GeneID" id="214704"/>
<dbReference type="KEGG" id="mmu:214704"/>
<dbReference type="UCSC" id="uc009bbr.2">
    <property type="organism name" value="mouse"/>
</dbReference>
<dbReference type="AGR" id="MGI:3041159"/>
<dbReference type="CTD" id="154865"/>
<dbReference type="MGI" id="MGI:3041159">
    <property type="gene designation" value="Iqub"/>
</dbReference>
<dbReference type="VEuPathDB" id="HostDB:ENSMUSG00000046192"/>
<dbReference type="eggNOG" id="ENOG502QRQT">
    <property type="taxonomic scope" value="Eukaryota"/>
</dbReference>
<dbReference type="GeneTree" id="ENSGT00390000014326"/>
<dbReference type="HOGENOM" id="CLU_014415_0_0_1"/>
<dbReference type="InParanoid" id="Q8CDK3"/>
<dbReference type="OMA" id="TFAQKER"/>
<dbReference type="OrthoDB" id="10265862at2759"/>
<dbReference type="PhylomeDB" id="Q8CDK3"/>
<dbReference type="TreeFam" id="TF323180"/>
<dbReference type="BioGRID-ORCS" id="214704">
    <property type="hits" value="0 hits in 77 CRISPR screens"/>
</dbReference>
<dbReference type="ChiTaRS" id="Iqub">
    <property type="organism name" value="mouse"/>
</dbReference>
<dbReference type="PRO" id="PR:Q8CDK3"/>
<dbReference type="Proteomes" id="UP000000589">
    <property type="component" value="Chromosome 6"/>
</dbReference>
<dbReference type="RNAct" id="Q8CDK3">
    <property type="molecule type" value="protein"/>
</dbReference>
<dbReference type="Bgee" id="ENSMUSG00000046192">
    <property type="expression patterns" value="Expressed in spermatid and 54 other cell types or tissues"/>
</dbReference>
<dbReference type="GO" id="GO:0097729">
    <property type="term" value="C:9+2 motile cilium"/>
    <property type="evidence" value="ECO:0000314"/>
    <property type="project" value="UniProtKB"/>
</dbReference>
<dbReference type="GO" id="GO:0001669">
    <property type="term" value="C:acrosomal vesicle"/>
    <property type="evidence" value="ECO:0000314"/>
    <property type="project" value="MGI"/>
</dbReference>
<dbReference type="GO" id="GO:0005576">
    <property type="term" value="C:extracellular region"/>
    <property type="evidence" value="ECO:0007669"/>
    <property type="project" value="GOC"/>
</dbReference>
<dbReference type="GO" id="GO:0031514">
    <property type="term" value="C:motile cilium"/>
    <property type="evidence" value="ECO:0000314"/>
    <property type="project" value="MGI"/>
</dbReference>
<dbReference type="GO" id="GO:0001534">
    <property type="term" value="C:radial spoke"/>
    <property type="evidence" value="ECO:0000314"/>
    <property type="project" value="UniProtKB"/>
</dbReference>
<dbReference type="GO" id="GO:0036126">
    <property type="term" value="C:sperm flagellum"/>
    <property type="evidence" value="ECO:0000314"/>
    <property type="project" value="UniProtKB"/>
</dbReference>
<dbReference type="GO" id="GO:0060271">
    <property type="term" value="P:cilium assembly"/>
    <property type="evidence" value="ECO:0000315"/>
    <property type="project" value="MGI"/>
</dbReference>
<dbReference type="GO" id="GO:0003351">
    <property type="term" value="P:epithelial cilium movement involved in extracellular fluid movement"/>
    <property type="evidence" value="ECO:0000305"/>
    <property type="project" value="UniProtKB"/>
</dbReference>
<dbReference type="GO" id="GO:0030317">
    <property type="term" value="P:flagellated sperm motility"/>
    <property type="evidence" value="ECO:0000315"/>
    <property type="project" value="UniProtKB"/>
</dbReference>
<dbReference type="GO" id="GO:0007618">
    <property type="term" value="P:mating"/>
    <property type="evidence" value="ECO:0000315"/>
    <property type="project" value="UniProtKB"/>
</dbReference>
<dbReference type="GO" id="GO:0007224">
    <property type="term" value="P:smoothened signaling pathway"/>
    <property type="evidence" value="ECO:0000315"/>
    <property type="project" value="MGI"/>
</dbReference>
<dbReference type="Gene3D" id="3.10.20.90">
    <property type="entry name" value="Phosphatidylinositol 3-kinase Catalytic Subunit, Chain A, domain 1"/>
    <property type="match status" value="1"/>
</dbReference>
<dbReference type="InterPro" id="IPR037695">
    <property type="entry name" value="IQUB"/>
</dbReference>
<dbReference type="InterPro" id="IPR029071">
    <property type="entry name" value="Ubiquitin-like_domsf"/>
</dbReference>
<dbReference type="PANTHER" id="PTHR21074">
    <property type="entry name" value="IQ AND UBIQUITIN-LIKE DOMAIN-CONTAINING PROTEIN"/>
    <property type="match status" value="1"/>
</dbReference>
<dbReference type="PANTHER" id="PTHR21074:SF0">
    <property type="entry name" value="IQ AND UBIQUITIN-LIKE DOMAIN-CONTAINING PROTEIN"/>
    <property type="match status" value="1"/>
</dbReference>
<dbReference type="SUPFAM" id="SSF54236">
    <property type="entry name" value="Ubiquitin-like"/>
    <property type="match status" value="1"/>
</dbReference>
<dbReference type="PROSITE" id="PS50096">
    <property type="entry name" value="IQ"/>
    <property type="match status" value="1"/>
</dbReference>
<protein>
    <recommendedName>
        <fullName>IQ motif and ubiquitin-like domain-containing protein</fullName>
    </recommendedName>
</protein>
<sequence length="788" mass="92130">MSDPEEERVADSTAHYEEAGKVISIPRPSDEAEGSDVMPEQDDEVQELTTESEENVERHSEFSLSTPKSDDSKPREEVTSLGSASGSQDQDYRLLDYQKGEDDELLFLHKIKAIKETLQTSVRESIATVKIVLIPAGQEIIMPFRVDAPFRFLKEHFAHLLHIPHYVLQITHEGIIVGNNESLIQYGIKPQEIVQVEVFSTLPDQYPVRRIEGLSEGSQIITVTIQTSIDRYEEVAVEIIKSDFHKPFLGGFRHKITGLEYHNAGTQTVPRKIPEKDNLFCRDTQTVFQKKKLQQTTNTTSTQMTKIGVYVSNMTDKLLKPGNYFSAAEYHARRLHAVIVIQTSYRRWHAKRYVESLRKQKKLRLEWEEEQELLKIQEKEEWIRMDYYRRHNPKTTEDFELLYNALELWRQEEVEQICHYSSEAERKAALCELLEKETQMIASIGRHRSAARMERQDAAIQAFLDKCSAPNVWRRGDGKTIEMDTQFTIRARELQSIYKCILLKDLSQDERLDILLTLKHTVKEHECKLTQEILELIDREVDLMMRGVKPHNLEGLRKRITTLFIHYIKTPLFNPEVAKYLKVPQDPLKFYDTIYFCHSCQNYLPSVEFSVSPTSHRVYRCRHCINLENETQRRESFLKYKCLLQRLYYSEADYGDNSQIAFLMQLQDIKYLTENIWASQSALSAWDDLNDLVMVRWDKHVEWSPWNCILLTKDESTAHLRLPSIEKGYGHHFVHKIKHKHILAKNYFSQIPTLASLILNDDEVEDIRSKHSTKSPPKIIITRRIQPH</sequence>
<reference key="1">
    <citation type="journal article" date="2005" name="Science">
        <title>The transcriptional landscape of the mammalian genome.</title>
        <authorList>
            <person name="Carninci P."/>
            <person name="Kasukawa T."/>
            <person name="Katayama S."/>
            <person name="Gough J."/>
            <person name="Frith M.C."/>
            <person name="Maeda N."/>
            <person name="Oyama R."/>
            <person name="Ravasi T."/>
            <person name="Lenhard B."/>
            <person name="Wells C."/>
            <person name="Kodzius R."/>
            <person name="Shimokawa K."/>
            <person name="Bajic V.B."/>
            <person name="Brenner S.E."/>
            <person name="Batalov S."/>
            <person name="Forrest A.R."/>
            <person name="Zavolan M."/>
            <person name="Davis M.J."/>
            <person name="Wilming L.G."/>
            <person name="Aidinis V."/>
            <person name="Allen J.E."/>
            <person name="Ambesi-Impiombato A."/>
            <person name="Apweiler R."/>
            <person name="Aturaliya R.N."/>
            <person name="Bailey T.L."/>
            <person name="Bansal M."/>
            <person name="Baxter L."/>
            <person name="Beisel K.W."/>
            <person name="Bersano T."/>
            <person name="Bono H."/>
            <person name="Chalk A.M."/>
            <person name="Chiu K.P."/>
            <person name="Choudhary V."/>
            <person name="Christoffels A."/>
            <person name="Clutterbuck D.R."/>
            <person name="Crowe M.L."/>
            <person name="Dalla E."/>
            <person name="Dalrymple B.P."/>
            <person name="de Bono B."/>
            <person name="Della Gatta G."/>
            <person name="di Bernardo D."/>
            <person name="Down T."/>
            <person name="Engstrom P."/>
            <person name="Fagiolini M."/>
            <person name="Faulkner G."/>
            <person name="Fletcher C.F."/>
            <person name="Fukushima T."/>
            <person name="Furuno M."/>
            <person name="Futaki S."/>
            <person name="Gariboldi M."/>
            <person name="Georgii-Hemming P."/>
            <person name="Gingeras T.R."/>
            <person name="Gojobori T."/>
            <person name="Green R.E."/>
            <person name="Gustincich S."/>
            <person name="Harbers M."/>
            <person name="Hayashi Y."/>
            <person name="Hensch T.K."/>
            <person name="Hirokawa N."/>
            <person name="Hill D."/>
            <person name="Huminiecki L."/>
            <person name="Iacono M."/>
            <person name="Ikeo K."/>
            <person name="Iwama A."/>
            <person name="Ishikawa T."/>
            <person name="Jakt M."/>
            <person name="Kanapin A."/>
            <person name="Katoh M."/>
            <person name="Kawasawa Y."/>
            <person name="Kelso J."/>
            <person name="Kitamura H."/>
            <person name="Kitano H."/>
            <person name="Kollias G."/>
            <person name="Krishnan S.P."/>
            <person name="Kruger A."/>
            <person name="Kummerfeld S.K."/>
            <person name="Kurochkin I.V."/>
            <person name="Lareau L.F."/>
            <person name="Lazarevic D."/>
            <person name="Lipovich L."/>
            <person name="Liu J."/>
            <person name="Liuni S."/>
            <person name="McWilliam S."/>
            <person name="Madan Babu M."/>
            <person name="Madera M."/>
            <person name="Marchionni L."/>
            <person name="Matsuda H."/>
            <person name="Matsuzawa S."/>
            <person name="Miki H."/>
            <person name="Mignone F."/>
            <person name="Miyake S."/>
            <person name="Morris K."/>
            <person name="Mottagui-Tabar S."/>
            <person name="Mulder N."/>
            <person name="Nakano N."/>
            <person name="Nakauchi H."/>
            <person name="Ng P."/>
            <person name="Nilsson R."/>
            <person name="Nishiguchi S."/>
            <person name="Nishikawa S."/>
            <person name="Nori F."/>
            <person name="Ohara O."/>
            <person name="Okazaki Y."/>
            <person name="Orlando V."/>
            <person name="Pang K.C."/>
            <person name="Pavan W.J."/>
            <person name="Pavesi G."/>
            <person name="Pesole G."/>
            <person name="Petrovsky N."/>
            <person name="Piazza S."/>
            <person name="Reed J."/>
            <person name="Reid J.F."/>
            <person name="Ring B.Z."/>
            <person name="Ringwald M."/>
            <person name="Rost B."/>
            <person name="Ruan Y."/>
            <person name="Salzberg S.L."/>
            <person name="Sandelin A."/>
            <person name="Schneider C."/>
            <person name="Schoenbach C."/>
            <person name="Sekiguchi K."/>
            <person name="Semple C.A."/>
            <person name="Seno S."/>
            <person name="Sessa L."/>
            <person name="Sheng Y."/>
            <person name="Shibata Y."/>
            <person name="Shimada H."/>
            <person name="Shimada K."/>
            <person name="Silva D."/>
            <person name="Sinclair B."/>
            <person name="Sperling S."/>
            <person name="Stupka E."/>
            <person name="Sugiura K."/>
            <person name="Sultana R."/>
            <person name="Takenaka Y."/>
            <person name="Taki K."/>
            <person name="Tammoja K."/>
            <person name="Tan S.L."/>
            <person name="Tang S."/>
            <person name="Taylor M.S."/>
            <person name="Tegner J."/>
            <person name="Teichmann S.A."/>
            <person name="Ueda H.R."/>
            <person name="van Nimwegen E."/>
            <person name="Verardo R."/>
            <person name="Wei C.L."/>
            <person name="Yagi K."/>
            <person name="Yamanishi H."/>
            <person name="Zabarovsky E."/>
            <person name="Zhu S."/>
            <person name="Zimmer A."/>
            <person name="Hide W."/>
            <person name="Bult C."/>
            <person name="Grimmond S.M."/>
            <person name="Teasdale R.D."/>
            <person name="Liu E.T."/>
            <person name="Brusic V."/>
            <person name="Quackenbush J."/>
            <person name="Wahlestedt C."/>
            <person name="Mattick J.S."/>
            <person name="Hume D.A."/>
            <person name="Kai C."/>
            <person name="Sasaki D."/>
            <person name="Tomaru Y."/>
            <person name="Fukuda S."/>
            <person name="Kanamori-Katayama M."/>
            <person name="Suzuki M."/>
            <person name="Aoki J."/>
            <person name="Arakawa T."/>
            <person name="Iida J."/>
            <person name="Imamura K."/>
            <person name="Itoh M."/>
            <person name="Kato T."/>
            <person name="Kawaji H."/>
            <person name="Kawagashira N."/>
            <person name="Kawashima T."/>
            <person name="Kojima M."/>
            <person name="Kondo S."/>
            <person name="Konno H."/>
            <person name="Nakano K."/>
            <person name="Ninomiya N."/>
            <person name="Nishio T."/>
            <person name="Okada M."/>
            <person name="Plessy C."/>
            <person name="Shibata K."/>
            <person name="Shiraki T."/>
            <person name="Suzuki S."/>
            <person name="Tagami M."/>
            <person name="Waki K."/>
            <person name="Watahiki A."/>
            <person name="Okamura-Oho Y."/>
            <person name="Suzuki H."/>
            <person name="Kawai J."/>
            <person name="Hayashizaki Y."/>
        </authorList>
    </citation>
    <scope>NUCLEOTIDE SEQUENCE [LARGE SCALE MRNA]</scope>
    <source>
        <strain>C57BL/6J</strain>
        <tissue>Testis</tissue>
    </source>
</reference>
<reference key="2">
    <citation type="journal article" date="2004" name="Genome Res.">
        <title>The status, quality, and expansion of the NIH full-length cDNA project: the Mammalian Gene Collection (MGC).</title>
        <authorList>
            <consortium name="The MGC Project Team"/>
        </authorList>
    </citation>
    <scope>NUCLEOTIDE SEQUENCE [LARGE SCALE MRNA]</scope>
    <source>
        <tissue>Brain</tissue>
    </source>
</reference>
<reference key="3">
    <citation type="journal article" date="2010" name="Cell">
        <title>A tissue-specific atlas of mouse protein phosphorylation and expression.</title>
        <authorList>
            <person name="Huttlin E.L."/>
            <person name="Jedrychowski M.P."/>
            <person name="Elias J.E."/>
            <person name="Goswami T."/>
            <person name="Rad R."/>
            <person name="Beausoleil S.A."/>
            <person name="Villen J."/>
            <person name="Haas W."/>
            <person name="Sowa M.E."/>
            <person name="Gygi S.P."/>
        </authorList>
    </citation>
    <scope>IDENTIFICATION BY MASS SPECTROMETRY [LARGE SCALE ANALYSIS]</scope>
    <source>
        <tissue>Testis</tissue>
    </source>
</reference>
<reference key="4">
    <citation type="journal article" date="2011" name="Mol. Biol. Cell">
        <title>Functional characterization of putative cilia genes by high-content analysis.</title>
        <authorList>
            <person name="Lai C.K."/>
            <person name="Gupta N."/>
            <person name="Wen X."/>
            <person name="Rangell L."/>
            <person name="Chih B."/>
            <person name="Peterson A.S."/>
            <person name="Bazan J.F."/>
            <person name="Li L."/>
            <person name="Scales S.J."/>
        </authorList>
    </citation>
    <scope>FUNCTION</scope>
    <scope>DISRUPTION PHENOTYPE</scope>
</reference>
<reference key="5">
    <citation type="journal article" date="2022" name="Cell Rep.">
        <title>Differential requirements of IQUB for the assembly of radial spoke 1 and the motility of mouse cilia and flagella.</title>
        <authorList>
            <person name="Zhang X."/>
            <person name="Xiao Z."/>
            <person name="Zhang J."/>
            <person name="Xu C."/>
            <person name="Liu S."/>
            <person name="Cheng L."/>
            <person name="Zhou S."/>
            <person name="Zhao S."/>
            <person name="Zhang Y."/>
            <person name="Wu J."/>
            <person name="Wang Y."/>
            <person name="Liu M."/>
        </authorList>
    </citation>
    <scope>FUNCTION</scope>
    <scope>IDENTIFICATION IN RADIAL SPOKE COMPLEX 1</scope>
    <scope>INTERACTION WITH CALM1; DNAJB13; DYNLL2; NME5 AND RSPH9</scope>
    <scope>IDENTIFICATION BY MASS SPECTROMETRY</scope>
    <scope>SUBCELLULAR LOCATION</scope>
    <scope>TISSUE SPECIFICITY</scope>
    <scope>DISRUPTION PHENOTYPE</scope>
</reference>
<reference key="6">
    <citation type="journal article" date="2022" name="Hum. Reprod.">
        <title>IQUB deficiency causes male infertility by affecting the activity of p-ERK1/2/RSPH3.</title>
        <authorList>
            <person name="Zhang Z."/>
            <person name="Zhou H."/>
            <person name="Deng X."/>
            <person name="Zhang R."/>
            <person name="Qu R."/>
            <person name="Mu J."/>
            <person name="Liu R."/>
            <person name="Zeng Y."/>
            <person name="Chen B."/>
            <person name="Wang L."/>
            <person name="Sang Q."/>
            <person name="Bao S."/>
        </authorList>
    </citation>
    <scope>FUNCTION</scope>
    <scope>DISRUPTION PHENOTYPE</scope>
    <scope>MUTAGENESIS OF 310-TYR--HIS-788</scope>
</reference>
<evidence type="ECO:0000250" key="1">
    <source>
        <dbReference type="UniProtKB" id="Q8NA54"/>
    </source>
</evidence>
<evidence type="ECO:0000255" key="2">
    <source>
        <dbReference type="PROSITE-ProRule" id="PRU00116"/>
    </source>
</evidence>
<evidence type="ECO:0000256" key="3">
    <source>
        <dbReference type="SAM" id="MobiDB-lite"/>
    </source>
</evidence>
<evidence type="ECO:0000269" key="4">
    <source>
    </source>
</evidence>
<evidence type="ECO:0000269" key="5">
    <source>
    </source>
</evidence>
<evidence type="ECO:0000269" key="6">
    <source>
    </source>
</evidence>
<evidence type="ECO:0000305" key="7"/>
<evidence type="ECO:0000305" key="8">
    <source>
    </source>
</evidence>
<keyword id="KW-0966">Cell projection</keyword>
<keyword id="KW-0969">Cilium</keyword>
<keyword id="KW-0970">Cilium biogenesis/degradation</keyword>
<keyword id="KW-0963">Cytoplasm</keyword>
<keyword id="KW-0206">Cytoskeleton</keyword>
<keyword id="KW-0282">Flagellum</keyword>
<keyword id="KW-1185">Reference proteome</keyword>
<comment type="function">
    <text evidence="4 5 6">Anchors the radial spoke 1 (RS1) complex to the A microtubule of outer doublet microtubules in axonemes (PubMed:36355624, PubMed:36417862). The triple radial spokes (RS1, RS2 and RS3) are required to modulate beating of the sperm flagellum (PubMed:36355624, PubMed:36417862). May play a role in inhibiting signaling via MAPK1/ERK2 and MAPK3/ERK1 (PubMed:36355624). Additionally, may play a role in the functioning of cilia (PubMed:21289087). Not required for the functioning of tracheal or ependymal cilia (PubMed:36417862).</text>
</comment>
<comment type="subunit">
    <text evidence="1 6 8">Component of the axonemal radial spoke 1 (RS1) complex, at least composed of spoke head proteins RSPH1, RSPH3B, RSPH9 and the cilia-specific component RSPH4A or sperm-specific component RSPH6A, spoke stalk proteins RSPH14, DNAJB13, DYDC1, ROPN1L and NME5, and the anchor protein IQUB (PubMed:36417862). Does not appear to be part of radial spoke complexes 2 or 3 (RS2 or RS3) (Probable). Interacts with CALM1 (PubMed:36417862). Interacts with DNAJB13 (PubMed:36417862). Interacts with DYNLL2 (PubMed:36417862). Interacts with NME5 (PubMed:36417862). Interacts with RSPH3 (By similarity). Interacts with RSPH9 (PubMed:36417862). Interacts with ZMYND10 (By similarity). Interacts with calmodulin; the interaction occurs in conditions of low but not high calcium (By similarity).</text>
</comment>
<comment type="subcellular location">
    <subcellularLocation>
        <location evidence="6">Cytoplasm</location>
        <location evidence="6">Cytoskeleton</location>
        <location evidence="6">Flagellum axoneme</location>
    </subcellularLocation>
    <subcellularLocation>
        <location evidence="6">Cell projection</location>
        <location evidence="6">Cilium</location>
    </subcellularLocation>
    <text evidence="6">Localizes to the axoneme of sperm cells and the cilia of tracheal epithelial cells.</text>
</comment>
<comment type="tissue specificity">
    <text evidence="6">Expressed in the flagellum of sperm cells and cilia of tracheal epithelial cells (at protein level) (PubMed:36417862). High expression in testis, also present in brain and lung (PubMed:36417862).</text>
</comment>
<comment type="disruption phenotype">
    <text evidence="4 5 6">Leads to an absence of radial spoke 1 (RS1) complex from sperm axonemes (PubMed:36417862). Leads to flagellar bending defects in sperm cells, and consequently abnormal flagellar beating and asthenospermia (reduced sperm motility) (PubMed:36355624, PubMed:36417862). Male mice are infertile, no effect on female fertility (PubMed:36355624, PubMed:36417862). Elongated cilia (PubMed:21289087). Increases levels of phosphorylated MAPK1/ERK2 and MAPK3/ERK1 (PubMed:36355624).</text>
</comment>
<accession>Q8CDK3</accession>
<accession>B2RQH8</accession>
<accession>Q3TT98</accession>
<name>IQUB_MOUSE</name>
<organism>
    <name type="scientific">Mus musculus</name>
    <name type="common">Mouse</name>
    <dbReference type="NCBI Taxonomy" id="10090"/>
    <lineage>
        <taxon>Eukaryota</taxon>
        <taxon>Metazoa</taxon>
        <taxon>Chordata</taxon>
        <taxon>Craniata</taxon>
        <taxon>Vertebrata</taxon>
        <taxon>Euteleostomi</taxon>
        <taxon>Mammalia</taxon>
        <taxon>Eutheria</taxon>
        <taxon>Euarchontoglires</taxon>
        <taxon>Glires</taxon>
        <taxon>Rodentia</taxon>
        <taxon>Myomorpha</taxon>
        <taxon>Muroidea</taxon>
        <taxon>Muridae</taxon>
        <taxon>Murinae</taxon>
        <taxon>Mus</taxon>
        <taxon>Mus</taxon>
    </lineage>
</organism>